<sequence length="973" mass="111412">MAQLYYKKVNYSPYRDRIPLQIVRAETELSAEEKAFLNAVEKGDYATVKQALQEAEIYYNVNINCMDPLGRSALLIAIENENLEIMELLLNHSVYVGDALLYAIRKEVVGAVELLLSYRRPSGEKQVPTLMMDTQFSEFTPDITPIMLAAHTNNYEIIKLLVQKRVTIPRPHQIRCNCVECVSSSEVDSLRHSRSRLNIYKALASPSLIALSSEDPILTAFRLGWELKELSKVENEFKAEYEELSQQCKLFAKDLLDQARSSRELEIILNHRDDHSEELDPQKYHDLAKLKVAIKYHQKEFVAQPNCQQLLATLWYDGFPGWRRKHWVVKLLTCMTIGFLFPMLSIAYLISPRSNLGLFIKKPFIKFICHTASYLTFLFMLLLASQHIVRTDLHVQGPPPTVVEWMILPWVLGFIWGEIKEMWDGGFTEYIHDWWNLMDFAMNSLYLATISLKIVAYVKYNGSRPREEWEMWHPTLIAEALFAISNILSSLRLISLFTANSHLGPLQISLGRMLLDILKFLFIYCLVLLAFANGLNQLYFYYETRAIDEPNNCKGIRCEKQNNAFSTLFETLQSLFWSVFGLLNLYVTNVKARHEFTEFVGATMFGTYNVISLVVLLNMLIAMMNNSYQLIADHADIEWKFARTKLWMSYFDEGGTLPPPFNIIPSPKSFLYLGNWFNNTFCPKRDPDGRRRRRNLRSFTERNADSLIQNQHYQEVIRNLVKRYVAAMIRNSKTHEGLTEENFKELKQDISSFRYEVLDLLGNRKHPRSFSTSSTELSQRDDNNDGSGGARAKSKSVSFNLGCKKKTCHGPPLIRTMPRSSGAQGKSKAESSSKRSFMGPSLKKLGLLFSKFNGHMSEPSSEPMYTISDGIVQQHCMWQDIRYSQMEKGKAEACSQSEINLSEVELGEVQGAAQSSECPLACSSSLHCASSICSSNSKLLDSSEDVFETWGEACDLLMHKWGDGQEEQVTTRL</sequence>
<evidence type="ECO:0000250" key="1">
    <source>
        <dbReference type="UniProtKB" id="Q9QX29"/>
    </source>
</evidence>
<evidence type="ECO:0000255" key="2"/>
<evidence type="ECO:0000256" key="3">
    <source>
        <dbReference type="SAM" id="MobiDB-lite"/>
    </source>
</evidence>
<evidence type="ECO:0000269" key="4">
    <source>
    </source>
</evidence>
<evidence type="ECO:0000269" key="5">
    <source>
    </source>
</evidence>
<evidence type="ECO:0000269" key="6">
    <source>
    </source>
</evidence>
<evidence type="ECO:0000269" key="7">
    <source>
    </source>
</evidence>
<evidence type="ECO:0000269" key="8">
    <source>
    </source>
</evidence>
<evidence type="ECO:0000269" key="9">
    <source>
    </source>
</evidence>
<evidence type="ECO:0000269" key="10">
    <source>
    </source>
</evidence>
<evidence type="ECO:0000269" key="11">
    <source>
    </source>
</evidence>
<evidence type="ECO:0000269" key="12">
    <source>
    </source>
</evidence>
<evidence type="ECO:0000269" key="13">
    <source>
    </source>
</evidence>
<evidence type="ECO:0000269" key="14">
    <source>
    </source>
</evidence>
<evidence type="ECO:0000269" key="15">
    <source>
    </source>
</evidence>
<evidence type="ECO:0000305" key="16"/>
<evidence type="ECO:0007744" key="17">
    <source>
        <dbReference type="PDB" id="7D4P"/>
    </source>
</evidence>
<evidence type="ECO:0007744" key="18">
    <source>
        <dbReference type="PDB" id="7D4Q"/>
    </source>
</evidence>
<evidence type="ECO:0007744" key="19">
    <source>
        <dbReference type="PDB" id="7E4T"/>
    </source>
</evidence>
<evidence type="ECO:0007744" key="20">
    <source>
        <dbReference type="PDB" id="7WDB"/>
    </source>
</evidence>
<evidence type="ECO:0007744" key="21">
    <source>
        <dbReference type="PDB" id="7X6C"/>
    </source>
</evidence>
<evidence type="ECO:0007744" key="22">
    <source>
        <dbReference type="PDB" id="7X6I"/>
    </source>
</evidence>
<evidence type="ECO:0007744" key="23">
    <source>
        <dbReference type="PDB" id="8GVW"/>
    </source>
</evidence>
<evidence type="ECO:0007744" key="24">
    <source>
        <dbReference type="PDB" id="8GVX"/>
    </source>
</evidence>
<evidence type="ECO:0007829" key="25">
    <source>
        <dbReference type="PDB" id="6YSN"/>
    </source>
</evidence>
<evidence type="ECO:0007829" key="26">
    <source>
        <dbReference type="PDB" id="7D4P"/>
    </source>
</evidence>
<evidence type="ECO:0007829" key="27">
    <source>
        <dbReference type="PDB" id="7E4T"/>
    </source>
</evidence>
<evidence type="ECO:0007829" key="28">
    <source>
        <dbReference type="PDB" id="7WDB"/>
    </source>
</evidence>
<evidence type="ECO:0007829" key="29">
    <source>
        <dbReference type="PDB" id="7X6C"/>
    </source>
</evidence>
<dbReference type="EMBL" id="AF054568">
    <property type="protein sequence ID" value="AAF00002.1"/>
    <property type="molecule type" value="mRNA"/>
</dbReference>
<dbReference type="EMBL" id="AC005191">
    <property type="protein sequence ID" value="AAC24563.1"/>
    <property type="molecule type" value="Genomic_DNA"/>
</dbReference>
<dbReference type="EMBL" id="AL049563">
    <property type="status" value="NOT_ANNOTATED_CDS"/>
    <property type="molecule type" value="Genomic_DNA"/>
</dbReference>
<dbReference type="EMBL" id="CH471120">
    <property type="protein sequence ID" value="EAX02630.1"/>
    <property type="molecule type" value="Genomic_DNA"/>
</dbReference>
<dbReference type="EMBL" id="BC137271">
    <property type="protein sequence ID" value="AAI37272.1"/>
    <property type="molecule type" value="mRNA"/>
</dbReference>
<dbReference type="EMBL" id="BC137274">
    <property type="protein sequence ID" value="AAI37275.1"/>
    <property type="molecule type" value="mRNA"/>
</dbReference>
<dbReference type="CCDS" id="CCDS14561.1"/>
<dbReference type="RefSeq" id="NP_036603.1">
    <property type="nucleotide sequence ID" value="NM_012471.3"/>
</dbReference>
<dbReference type="RefSeq" id="XP_016885263.1">
    <property type="nucleotide sequence ID" value="XM_017029774.2"/>
</dbReference>
<dbReference type="RefSeq" id="XP_054183648.1">
    <property type="nucleotide sequence ID" value="XM_054327673.1"/>
</dbReference>
<dbReference type="PDB" id="6YSN">
    <property type="method" value="EM"/>
    <property type="resolution" value="3.00 A"/>
    <property type="chains" value="A/B/C/D=1-765"/>
</dbReference>
<dbReference type="PDB" id="7D4P">
    <property type="method" value="EM"/>
    <property type="resolution" value="2.70 A"/>
    <property type="chains" value="A/B/C/D=1-764"/>
</dbReference>
<dbReference type="PDB" id="7D4Q">
    <property type="method" value="EM"/>
    <property type="resolution" value="2.74 A"/>
    <property type="chains" value="A/B/C/D=1-764"/>
</dbReference>
<dbReference type="PDB" id="7E4T">
    <property type="method" value="EM"/>
    <property type="resolution" value="3.00 A"/>
    <property type="chains" value="A/B/C/D=1-764"/>
</dbReference>
<dbReference type="PDB" id="7WDB">
    <property type="method" value="EM"/>
    <property type="resolution" value="2.40 A"/>
    <property type="chains" value="A/B/C/D=1-764"/>
</dbReference>
<dbReference type="PDB" id="7X6C">
    <property type="method" value="EM"/>
    <property type="resolution" value="3.15 A"/>
    <property type="chains" value="A/B/C/D=1-765"/>
</dbReference>
<dbReference type="PDB" id="7X6I">
    <property type="method" value="EM"/>
    <property type="resolution" value="3.93 A"/>
    <property type="chains" value="A/B/C/D=1-765"/>
</dbReference>
<dbReference type="PDB" id="8GVW">
    <property type="method" value="EM"/>
    <property type="resolution" value="3.59 A"/>
    <property type="chains" value="A/B/C/D=1-765"/>
</dbReference>
<dbReference type="PDB" id="8GVX">
    <property type="method" value="EM"/>
    <property type="resolution" value="3.91 A"/>
    <property type="chains" value="A/B/C/D=1-765"/>
</dbReference>
<dbReference type="PDBsum" id="6YSN"/>
<dbReference type="PDBsum" id="7D4P"/>
<dbReference type="PDBsum" id="7D4Q"/>
<dbReference type="PDBsum" id="7E4T"/>
<dbReference type="PDBsum" id="7WDB"/>
<dbReference type="PDBsum" id="7X6C"/>
<dbReference type="PDBsum" id="7X6I"/>
<dbReference type="PDBsum" id="8GVW"/>
<dbReference type="PDBsum" id="8GVX"/>
<dbReference type="EMDB" id="EMD-10903"/>
<dbReference type="EMDB" id="EMD-30575"/>
<dbReference type="EMDB" id="EMD-30576"/>
<dbReference type="EMDB" id="EMD-30987"/>
<dbReference type="EMDB" id="EMD-32436"/>
<dbReference type="EMDB" id="EMD-33021"/>
<dbReference type="EMDB" id="EMD-33022"/>
<dbReference type="EMDB" id="EMD-34300"/>
<dbReference type="EMDB" id="EMD-34301"/>
<dbReference type="SMR" id="Q9UL62"/>
<dbReference type="BioGRID" id="113075">
    <property type="interactions" value="21"/>
</dbReference>
<dbReference type="ComplexPortal" id="CPX-25765">
    <property type="entry name" value="Short transient receptor potential channel complex, TRPC1-TRPC5 variant"/>
</dbReference>
<dbReference type="ComplexPortal" id="CPX-25775">
    <property type="entry name" value="Short transient receptor potential channel complex,TRPC1-TRPC4-TRPC5 variant"/>
</dbReference>
<dbReference type="ComplexPortal" id="CPX-25776">
    <property type="entry name" value="Short transient receptor potential channel complex, TRPC5 variant"/>
</dbReference>
<dbReference type="FunCoup" id="Q9UL62">
    <property type="interactions" value="48"/>
</dbReference>
<dbReference type="IntAct" id="Q9UL62">
    <property type="interactions" value="3"/>
</dbReference>
<dbReference type="STRING" id="9606.ENSP00000262839"/>
<dbReference type="BindingDB" id="Q9UL62"/>
<dbReference type="ChEMBL" id="CHEMBL1250411"/>
<dbReference type="DrugBank" id="DB13182">
    <property type="generic name" value="Daidzein"/>
</dbReference>
<dbReference type="DrugCentral" id="Q9UL62"/>
<dbReference type="GuidetoPHARMACOLOGY" id="490"/>
<dbReference type="TCDB" id="1.A.4.1.7">
    <property type="family name" value="the transient receptor potential ca2+/cation channel (trp-cc) family"/>
</dbReference>
<dbReference type="GlyCosmos" id="Q9UL62">
    <property type="glycosylation" value="1 site, No reported glycans"/>
</dbReference>
<dbReference type="GlyGen" id="Q9UL62">
    <property type="glycosylation" value="4 sites, 1 N-linked glycan (1 site), 1 O-linked glycan (1 site)"/>
</dbReference>
<dbReference type="iPTMnet" id="Q9UL62"/>
<dbReference type="PhosphoSitePlus" id="Q9UL62"/>
<dbReference type="SwissPalm" id="Q9UL62"/>
<dbReference type="BioMuta" id="TRPC5"/>
<dbReference type="DMDM" id="10720321"/>
<dbReference type="jPOST" id="Q9UL62"/>
<dbReference type="MassIVE" id="Q9UL62"/>
<dbReference type="PaxDb" id="9606-ENSP00000262839"/>
<dbReference type="PeptideAtlas" id="Q9UL62"/>
<dbReference type="ProteomicsDB" id="84958"/>
<dbReference type="ABCD" id="Q9UL62">
    <property type="antibodies" value="1 sequenced antibody"/>
</dbReference>
<dbReference type="Antibodypedia" id="356">
    <property type="antibodies" value="303 antibodies from 32 providers"/>
</dbReference>
<dbReference type="DNASU" id="7224"/>
<dbReference type="Ensembl" id="ENST00000262839.3">
    <property type="protein sequence ID" value="ENSP00000262839.2"/>
    <property type="gene ID" value="ENSG00000072315.4"/>
</dbReference>
<dbReference type="GeneID" id="7224"/>
<dbReference type="KEGG" id="hsa:7224"/>
<dbReference type="MANE-Select" id="ENST00000262839.3">
    <property type="protein sequence ID" value="ENSP00000262839.2"/>
    <property type="RefSeq nucleotide sequence ID" value="NM_012471.3"/>
    <property type="RefSeq protein sequence ID" value="NP_036603.1"/>
</dbReference>
<dbReference type="UCSC" id="uc004epl.2">
    <property type="organism name" value="human"/>
</dbReference>
<dbReference type="AGR" id="HGNC:12337"/>
<dbReference type="CTD" id="7224"/>
<dbReference type="DisGeNET" id="7224"/>
<dbReference type="GeneCards" id="TRPC5"/>
<dbReference type="HGNC" id="HGNC:12337">
    <property type="gene designation" value="TRPC5"/>
</dbReference>
<dbReference type="HPA" id="ENSG00000072315">
    <property type="expression patterns" value="Tissue enhanced (brain)"/>
</dbReference>
<dbReference type="MalaCards" id="TRPC5"/>
<dbReference type="MIM" id="300334">
    <property type="type" value="gene"/>
</dbReference>
<dbReference type="neXtProt" id="NX_Q9UL62"/>
<dbReference type="OpenTargets" id="ENSG00000072315"/>
<dbReference type="PharmGKB" id="PA37010"/>
<dbReference type="VEuPathDB" id="HostDB:ENSG00000072315"/>
<dbReference type="eggNOG" id="KOG3609">
    <property type="taxonomic scope" value="Eukaryota"/>
</dbReference>
<dbReference type="GeneTree" id="ENSGT01060000248594"/>
<dbReference type="HOGENOM" id="CLU_005716_4_1_1"/>
<dbReference type="InParanoid" id="Q9UL62"/>
<dbReference type="OMA" id="LCKWIHK"/>
<dbReference type="OrthoDB" id="2373987at2759"/>
<dbReference type="PAN-GO" id="Q9UL62">
    <property type="GO annotations" value="7 GO annotations based on evolutionary models"/>
</dbReference>
<dbReference type="PhylomeDB" id="Q9UL62"/>
<dbReference type="TreeFam" id="TF313147"/>
<dbReference type="PathwayCommons" id="Q9UL62"/>
<dbReference type="Reactome" id="R-HSA-3295583">
    <property type="pathway name" value="TRP channels"/>
</dbReference>
<dbReference type="Reactome" id="R-HSA-418890">
    <property type="pathway name" value="Role of second messengers in netrin-1 signaling"/>
</dbReference>
<dbReference type="SignaLink" id="Q9UL62"/>
<dbReference type="SIGNOR" id="Q9UL62"/>
<dbReference type="BioGRID-ORCS" id="7224">
    <property type="hits" value="15 hits in 769 CRISPR screens"/>
</dbReference>
<dbReference type="ChiTaRS" id="TRPC5">
    <property type="organism name" value="human"/>
</dbReference>
<dbReference type="GeneWiki" id="TRPC5"/>
<dbReference type="GenomeRNAi" id="7224"/>
<dbReference type="Pharos" id="Q9UL62">
    <property type="development level" value="Tchem"/>
</dbReference>
<dbReference type="PRO" id="PR:Q9UL62"/>
<dbReference type="Proteomes" id="UP000005640">
    <property type="component" value="Chromosome X"/>
</dbReference>
<dbReference type="RNAct" id="Q9UL62">
    <property type="molecule type" value="protein"/>
</dbReference>
<dbReference type="Bgee" id="ENSG00000072315">
    <property type="expression patterns" value="Expressed in male germ line stem cell (sensu Vertebrata) in testis and 25 other cell types or tissues"/>
</dbReference>
<dbReference type="GO" id="GO:0034704">
    <property type="term" value="C:calcium channel complex"/>
    <property type="evidence" value="ECO:0000314"/>
    <property type="project" value="UniProtKB"/>
</dbReference>
<dbReference type="GO" id="GO:0034703">
    <property type="term" value="C:cation channel complex"/>
    <property type="evidence" value="ECO:0000318"/>
    <property type="project" value="GO_Central"/>
</dbReference>
<dbReference type="GO" id="GO:0030425">
    <property type="term" value="C:dendrite"/>
    <property type="evidence" value="ECO:0007669"/>
    <property type="project" value="Ensembl"/>
</dbReference>
<dbReference type="GO" id="GO:0030426">
    <property type="term" value="C:growth cone"/>
    <property type="evidence" value="ECO:0007669"/>
    <property type="project" value="Ensembl"/>
</dbReference>
<dbReference type="GO" id="GO:0043025">
    <property type="term" value="C:neuronal cell body"/>
    <property type="evidence" value="ECO:0007669"/>
    <property type="project" value="Ensembl"/>
</dbReference>
<dbReference type="GO" id="GO:0005886">
    <property type="term" value="C:plasma membrane"/>
    <property type="evidence" value="ECO:0000315"/>
    <property type="project" value="UniProtKB"/>
</dbReference>
<dbReference type="GO" id="GO:0098793">
    <property type="term" value="C:presynapse"/>
    <property type="evidence" value="ECO:0007669"/>
    <property type="project" value="Ensembl"/>
</dbReference>
<dbReference type="GO" id="GO:0003779">
    <property type="term" value="F:actin binding"/>
    <property type="evidence" value="ECO:0007669"/>
    <property type="project" value="Ensembl"/>
</dbReference>
<dbReference type="GO" id="GO:0042805">
    <property type="term" value="F:actinin binding"/>
    <property type="evidence" value="ECO:0007669"/>
    <property type="project" value="Ensembl"/>
</dbReference>
<dbReference type="GO" id="GO:0051117">
    <property type="term" value="F:ATPase binding"/>
    <property type="evidence" value="ECO:0007669"/>
    <property type="project" value="Ensembl"/>
</dbReference>
<dbReference type="GO" id="GO:0005262">
    <property type="term" value="F:calcium channel activity"/>
    <property type="evidence" value="ECO:0000314"/>
    <property type="project" value="UniProtKB"/>
</dbReference>
<dbReference type="GO" id="GO:0030276">
    <property type="term" value="F:clathrin binding"/>
    <property type="evidence" value="ECO:0007669"/>
    <property type="project" value="Ensembl"/>
</dbReference>
<dbReference type="GO" id="GO:0070679">
    <property type="term" value="F:inositol 1,4,5 trisphosphate binding"/>
    <property type="evidence" value="ECO:0000318"/>
    <property type="project" value="GO_Central"/>
</dbReference>
<dbReference type="GO" id="GO:0015279">
    <property type="term" value="F:store-operated calcium channel activity"/>
    <property type="evidence" value="ECO:0000318"/>
    <property type="project" value="GO_Central"/>
</dbReference>
<dbReference type="GO" id="GO:0070588">
    <property type="term" value="P:calcium ion transmembrane transport"/>
    <property type="evidence" value="ECO:0000318"/>
    <property type="project" value="GO_Central"/>
</dbReference>
<dbReference type="GO" id="GO:0006816">
    <property type="term" value="P:calcium ion transport"/>
    <property type="evidence" value="ECO:0000304"/>
    <property type="project" value="ProtInc"/>
</dbReference>
<dbReference type="GO" id="GO:0050774">
    <property type="term" value="P:negative regulation of dendrite morphogenesis"/>
    <property type="evidence" value="ECO:0007669"/>
    <property type="project" value="Ensembl"/>
</dbReference>
<dbReference type="GO" id="GO:0007399">
    <property type="term" value="P:nervous system development"/>
    <property type="evidence" value="ECO:0000304"/>
    <property type="project" value="ProtInc"/>
</dbReference>
<dbReference type="GO" id="GO:0051402">
    <property type="term" value="P:neuron apoptotic process"/>
    <property type="evidence" value="ECO:0000250"/>
    <property type="project" value="UniProtKB"/>
</dbReference>
<dbReference type="GO" id="GO:0030182">
    <property type="term" value="P:neuron differentiation"/>
    <property type="evidence" value="ECO:0007669"/>
    <property type="project" value="Ensembl"/>
</dbReference>
<dbReference type="GO" id="GO:0070782">
    <property type="term" value="P:phosphatidylserine exposure on apoptotic cell surface"/>
    <property type="evidence" value="ECO:0000250"/>
    <property type="project" value="UniProtKB"/>
</dbReference>
<dbReference type="GO" id="GO:0045773">
    <property type="term" value="P:positive regulation of axon extension"/>
    <property type="evidence" value="ECO:0007669"/>
    <property type="project" value="Ensembl"/>
</dbReference>
<dbReference type="GO" id="GO:0008284">
    <property type="term" value="P:positive regulation of cell population proliferation"/>
    <property type="evidence" value="ECO:0007669"/>
    <property type="project" value="Ensembl"/>
</dbReference>
<dbReference type="GO" id="GO:0007204">
    <property type="term" value="P:positive regulation of cytosolic calcium ion concentration"/>
    <property type="evidence" value="ECO:0007669"/>
    <property type="project" value="Ensembl"/>
</dbReference>
<dbReference type="GO" id="GO:0045666">
    <property type="term" value="P:positive regulation of neuron differentiation"/>
    <property type="evidence" value="ECO:0007669"/>
    <property type="project" value="Ensembl"/>
</dbReference>
<dbReference type="GO" id="GO:0051480">
    <property type="term" value="P:regulation of cytosolic calcium ion concentration"/>
    <property type="evidence" value="ECO:0000318"/>
    <property type="project" value="GO_Central"/>
</dbReference>
<dbReference type="GO" id="GO:1902630">
    <property type="term" value="P:regulation of membrane hyperpolarization"/>
    <property type="evidence" value="ECO:0007669"/>
    <property type="project" value="Ensembl"/>
</dbReference>
<dbReference type="FunFam" id="1.25.40.20:FF:000023">
    <property type="entry name" value="short transient receptor potential channel 4 isoform X1"/>
    <property type="match status" value="1"/>
</dbReference>
<dbReference type="Gene3D" id="1.25.40.20">
    <property type="entry name" value="Ankyrin repeat-containing domain"/>
    <property type="match status" value="1"/>
</dbReference>
<dbReference type="InterPro" id="IPR002110">
    <property type="entry name" value="Ankyrin_rpt"/>
</dbReference>
<dbReference type="InterPro" id="IPR036770">
    <property type="entry name" value="Ankyrin_rpt-contain_sf"/>
</dbReference>
<dbReference type="InterPro" id="IPR005821">
    <property type="entry name" value="Ion_trans_dom"/>
</dbReference>
<dbReference type="InterPro" id="IPR013555">
    <property type="entry name" value="TRP_dom"/>
</dbReference>
<dbReference type="InterPro" id="IPR005461">
    <property type="entry name" value="TRPC5_channel"/>
</dbReference>
<dbReference type="InterPro" id="IPR002153">
    <property type="entry name" value="TRPC_channel"/>
</dbReference>
<dbReference type="NCBIfam" id="TIGR00870">
    <property type="entry name" value="trp"/>
    <property type="match status" value="1"/>
</dbReference>
<dbReference type="PANTHER" id="PTHR10117:SF76">
    <property type="entry name" value="SHORT TRANSIENT RECEPTOR POTENTIAL CHANNEL 5"/>
    <property type="match status" value="1"/>
</dbReference>
<dbReference type="PANTHER" id="PTHR10117">
    <property type="entry name" value="TRANSIENT RECEPTOR POTENTIAL CHANNEL"/>
    <property type="match status" value="1"/>
</dbReference>
<dbReference type="Pfam" id="PF00023">
    <property type="entry name" value="Ank"/>
    <property type="match status" value="1"/>
</dbReference>
<dbReference type="Pfam" id="PF12796">
    <property type="entry name" value="Ank_2"/>
    <property type="match status" value="1"/>
</dbReference>
<dbReference type="Pfam" id="PF00520">
    <property type="entry name" value="Ion_trans"/>
    <property type="match status" value="1"/>
</dbReference>
<dbReference type="Pfam" id="PF08344">
    <property type="entry name" value="TRP_2"/>
    <property type="match status" value="1"/>
</dbReference>
<dbReference type="PRINTS" id="PR01097">
    <property type="entry name" value="TRNSRECEPTRP"/>
</dbReference>
<dbReference type="PRINTS" id="PR01646">
    <property type="entry name" value="TRPCHANNEL5"/>
</dbReference>
<dbReference type="SMART" id="SM00248">
    <property type="entry name" value="ANK"/>
    <property type="match status" value="2"/>
</dbReference>
<dbReference type="SMART" id="SM01420">
    <property type="entry name" value="TRP_2"/>
    <property type="match status" value="1"/>
</dbReference>
<dbReference type="SUPFAM" id="SSF48403">
    <property type="entry name" value="Ankyrin repeat"/>
    <property type="match status" value="1"/>
</dbReference>
<name>TRPC5_HUMAN</name>
<comment type="function">
    <text evidence="1 7 13 14">Forms a receptor-activated non-selective calcium permeant cation channel (PubMed:16284075, PubMed:38959890, PubMed:37137991). Mediates calcium-dependent phosphatidylserine externalization and apoptosis in neurons via its association with PLSCR1 (By similarity). Acts on distinct neuronal populations in the hypothalamus to regulate innate behaviors including feeding, anxiety (flight/fight/fear), socialization, and maternal care (By similarity).</text>
</comment>
<comment type="catalytic activity">
    <reaction evidence="7 13 14">
        <text>Ca(2+)(in) = Ca(2+)(out)</text>
        <dbReference type="Rhea" id="RHEA:29671"/>
        <dbReference type="ChEBI" id="CHEBI:29108"/>
    </reaction>
</comment>
<comment type="activity regulation">
    <text evidence="7 13">Activated by G-protein coupled receptors via direct interaction with GTP-bound GNAI3, which increases the channel sensitivity to phosphatidylinositol bisphosphate (PubMed:37137991). May be activated by intracellular calcium store depletion. Calcium channel activity is enhanced by MYLK, that promotes its subcellular localization at the plasma membrane.</text>
</comment>
<comment type="subunit">
    <text evidence="1 4 5 6 8 9 10 12 13">Homotetramer (PubMed:12032305, PubMed:37137991). Heterotetramer with TRPC1 and/or TRPC4 (PubMed:12032305). Each subunit in the homomeric ion channel (via ANK repeats) interacts with one copy of GTP-bound GNAI3; the interaction is direct and activates the ion channel (PubMed:37137991). Interacts with TRPC4AP (By similarity). Interacts with NHERF1 (By similarity). Interacts with MX1 and RNF24 (PubMed:15757897, PubMed:17850865). Interacts (via C-terminus) with CABP1 (PubMed:15895247). Interacts with SESTD1 (via the spectrin 1 repeat) (PubMed:20164195). Interacts with PLSCR1 (PubMed:32110987). Interacts with PKD2L2 (PubMed:16883570).</text>
</comment>
<comment type="subcellular location">
    <subcellularLocation>
        <location evidence="7 14">Cell membrane</location>
        <topology evidence="13">Multi-pass membrane protein</topology>
    </subcellularLocation>
</comment>
<comment type="tissue specificity">
    <text evidence="15">Expressed in brain with higher levels in fetal brain. Found in cerebellum and occipital pole.</text>
</comment>
<comment type="disease">
    <text evidence="14">Loss-of-function variants in TRPC5 may be involved in a mental disorder characterized by maladaptive behavior, anxiety, autism, postpartum depression, extreme food-seeking and hoarding behavior, hyperphagia and obesity.</text>
</comment>
<comment type="similarity">
    <text evidence="16">Belongs to the transient receptor (TC 1.A.4) family. STrpC subfamily. TRPC5 sub-subfamily.</text>
</comment>
<organism>
    <name type="scientific">Homo sapiens</name>
    <name type="common">Human</name>
    <dbReference type="NCBI Taxonomy" id="9606"/>
    <lineage>
        <taxon>Eukaryota</taxon>
        <taxon>Metazoa</taxon>
        <taxon>Chordata</taxon>
        <taxon>Craniata</taxon>
        <taxon>Vertebrata</taxon>
        <taxon>Euteleostomi</taxon>
        <taxon>Mammalia</taxon>
        <taxon>Eutheria</taxon>
        <taxon>Euarchontoglires</taxon>
        <taxon>Primates</taxon>
        <taxon>Haplorrhini</taxon>
        <taxon>Catarrhini</taxon>
        <taxon>Hominidae</taxon>
        <taxon>Homo</taxon>
    </lineage>
</organism>
<reference key="1">
    <citation type="journal article" date="1999" name="Genomics">
        <title>Molecular cloning and characterization of TRPC5 (HTRP5), the human homologue of a mouse brain receptor-activated capacitative Ca(2+) entry channel.</title>
        <authorList>
            <person name="Sossey-Alaoui K."/>
            <person name="Lyon J.A."/>
            <person name="Jones L."/>
            <person name="Abidi F.E."/>
            <person name="Hartung A.J."/>
            <person name="Hane B."/>
            <person name="Schwartz C.E."/>
            <person name="Stevenson R.E."/>
            <person name="Srivastava A.K."/>
        </authorList>
    </citation>
    <scope>NUCLEOTIDE SEQUENCE [MRNA]</scope>
    <source>
        <tissue>Fetal brain</tissue>
    </source>
</reference>
<reference key="2">
    <citation type="journal article" date="2005" name="Nature">
        <title>The DNA sequence of the human X chromosome.</title>
        <authorList>
            <person name="Ross M.T."/>
            <person name="Grafham D.V."/>
            <person name="Coffey A.J."/>
            <person name="Scherer S."/>
            <person name="McLay K."/>
            <person name="Muzny D."/>
            <person name="Platzer M."/>
            <person name="Howell G.R."/>
            <person name="Burrows C."/>
            <person name="Bird C.P."/>
            <person name="Frankish A."/>
            <person name="Lovell F.L."/>
            <person name="Howe K.L."/>
            <person name="Ashurst J.L."/>
            <person name="Fulton R.S."/>
            <person name="Sudbrak R."/>
            <person name="Wen G."/>
            <person name="Jones M.C."/>
            <person name="Hurles M.E."/>
            <person name="Andrews T.D."/>
            <person name="Scott C.E."/>
            <person name="Searle S."/>
            <person name="Ramser J."/>
            <person name="Whittaker A."/>
            <person name="Deadman R."/>
            <person name="Carter N.P."/>
            <person name="Hunt S.E."/>
            <person name="Chen R."/>
            <person name="Cree A."/>
            <person name="Gunaratne P."/>
            <person name="Havlak P."/>
            <person name="Hodgson A."/>
            <person name="Metzker M.L."/>
            <person name="Richards S."/>
            <person name="Scott G."/>
            <person name="Steffen D."/>
            <person name="Sodergren E."/>
            <person name="Wheeler D.A."/>
            <person name="Worley K.C."/>
            <person name="Ainscough R."/>
            <person name="Ambrose K.D."/>
            <person name="Ansari-Lari M.A."/>
            <person name="Aradhya S."/>
            <person name="Ashwell R.I."/>
            <person name="Babbage A.K."/>
            <person name="Bagguley C.L."/>
            <person name="Ballabio A."/>
            <person name="Banerjee R."/>
            <person name="Barker G.E."/>
            <person name="Barlow K.F."/>
            <person name="Barrett I.P."/>
            <person name="Bates K.N."/>
            <person name="Beare D.M."/>
            <person name="Beasley H."/>
            <person name="Beasley O."/>
            <person name="Beck A."/>
            <person name="Bethel G."/>
            <person name="Blechschmidt K."/>
            <person name="Brady N."/>
            <person name="Bray-Allen S."/>
            <person name="Bridgeman A.M."/>
            <person name="Brown A.J."/>
            <person name="Brown M.J."/>
            <person name="Bonnin D."/>
            <person name="Bruford E.A."/>
            <person name="Buhay C."/>
            <person name="Burch P."/>
            <person name="Burford D."/>
            <person name="Burgess J."/>
            <person name="Burrill W."/>
            <person name="Burton J."/>
            <person name="Bye J.M."/>
            <person name="Carder C."/>
            <person name="Carrel L."/>
            <person name="Chako J."/>
            <person name="Chapman J.C."/>
            <person name="Chavez D."/>
            <person name="Chen E."/>
            <person name="Chen G."/>
            <person name="Chen Y."/>
            <person name="Chen Z."/>
            <person name="Chinault C."/>
            <person name="Ciccodicola A."/>
            <person name="Clark S.Y."/>
            <person name="Clarke G."/>
            <person name="Clee C.M."/>
            <person name="Clegg S."/>
            <person name="Clerc-Blankenburg K."/>
            <person name="Clifford K."/>
            <person name="Cobley V."/>
            <person name="Cole C.G."/>
            <person name="Conquer J.S."/>
            <person name="Corby N."/>
            <person name="Connor R.E."/>
            <person name="David R."/>
            <person name="Davies J."/>
            <person name="Davis C."/>
            <person name="Davis J."/>
            <person name="Delgado O."/>
            <person name="Deshazo D."/>
            <person name="Dhami P."/>
            <person name="Ding Y."/>
            <person name="Dinh H."/>
            <person name="Dodsworth S."/>
            <person name="Draper H."/>
            <person name="Dugan-Rocha S."/>
            <person name="Dunham A."/>
            <person name="Dunn M."/>
            <person name="Durbin K.J."/>
            <person name="Dutta I."/>
            <person name="Eades T."/>
            <person name="Ellwood M."/>
            <person name="Emery-Cohen A."/>
            <person name="Errington H."/>
            <person name="Evans K.L."/>
            <person name="Faulkner L."/>
            <person name="Francis F."/>
            <person name="Frankland J."/>
            <person name="Fraser A.E."/>
            <person name="Galgoczy P."/>
            <person name="Gilbert J."/>
            <person name="Gill R."/>
            <person name="Gloeckner G."/>
            <person name="Gregory S.G."/>
            <person name="Gribble S."/>
            <person name="Griffiths C."/>
            <person name="Grocock R."/>
            <person name="Gu Y."/>
            <person name="Gwilliam R."/>
            <person name="Hamilton C."/>
            <person name="Hart E.A."/>
            <person name="Hawes A."/>
            <person name="Heath P.D."/>
            <person name="Heitmann K."/>
            <person name="Hennig S."/>
            <person name="Hernandez J."/>
            <person name="Hinzmann B."/>
            <person name="Ho S."/>
            <person name="Hoffs M."/>
            <person name="Howden P.J."/>
            <person name="Huckle E.J."/>
            <person name="Hume J."/>
            <person name="Hunt P.J."/>
            <person name="Hunt A.R."/>
            <person name="Isherwood J."/>
            <person name="Jacob L."/>
            <person name="Johnson D."/>
            <person name="Jones S."/>
            <person name="de Jong P.J."/>
            <person name="Joseph S.S."/>
            <person name="Keenan S."/>
            <person name="Kelly S."/>
            <person name="Kershaw J.K."/>
            <person name="Khan Z."/>
            <person name="Kioschis P."/>
            <person name="Klages S."/>
            <person name="Knights A.J."/>
            <person name="Kosiura A."/>
            <person name="Kovar-Smith C."/>
            <person name="Laird G.K."/>
            <person name="Langford C."/>
            <person name="Lawlor S."/>
            <person name="Leversha M."/>
            <person name="Lewis L."/>
            <person name="Liu W."/>
            <person name="Lloyd C."/>
            <person name="Lloyd D.M."/>
            <person name="Loulseged H."/>
            <person name="Loveland J.E."/>
            <person name="Lovell J.D."/>
            <person name="Lozado R."/>
            <person name="Lu J."/>
            <person name="Lyne R."/>
            <person name="Ma J."/>
            <person name="Maheshwari M."/>
            <person name="Matthews L.H."/>
            <person name="McDowall J."/>
            <person name="McLaren S."/>
            <person name="McMurray A."/>
            <person name="Meidl P."/>
            <person name="Meitinger T."/>
            <person name="Milne S."/>
            <person name="Miner G."/>
            <person name="Mistry S.L."/>
            <person name="Morgan M."/>
            <person name="Morris S."/>
            <person name="Mueller I."/>
            <person name="Mullikin J.C."/>
            <person name="Nguyen N."/>
            <person name="Nordsiek G."/>
            <person name="Nyakatura G."/>
            <person name="O'dell C.N."/>
            <person name="Okwuonu G."/>
            <person name="Palmer S."/>
            <person name="Pandian R."/>
            <person name="Parker D."/>
            <person name="Parrish J."/>
            <person name="Pasternak S."/>
            <person name="Patel D."/>
            <person name="Pearce A.V."/>
            <person name="Pearson D.M."/>
            <person name="Pelan S.E."/>
            <person name="Perez L."/>
            <person name="Porter K.M."/>
            <person name="Ramsey Y."/>
            <person name="Reichwald K."/>
            <person name="Rhodes S."/>
            <person name="Ridler K.A."/>
            <person name="Schlessinger D."/>
            <person name="Schueler M.G."/>
            <person name="Sehra H.K."/>
            <person name="Shaw-Smith C."/>
            <person name="Shen H."/>
            <person name="Sheridan E.M."/>
            <person name="Shownkeen R."/>
            <person name="Skuce C.D."/>
            <person name="Smith M.L."/>
            <person name="Sotheran E.C."/>
            <person name="Steingruber H.E."/>
            <person name="Steward C.A."/>
            <person name="Storey R."/>
            <person name="Swann R.M."/>
            <person name="Swarbreck D."/>
            <person name="Tabor P.E."/>
            <person name="Taudien S."/>
            <person name="Taylor T."/>
            <person name="Teague B."/>
            <person name="Thomas K."/>
            <person name="Thorpe A."/>
            <person name="Timms K."/>
            <person name="Tracey A."/>
            <person name="Trevanion S."/>
            <person name="Tromans A.C."/>
            <person name="d'Urso M."/>
            <person name="Verduzco D."/>
            <person name="Villasana D."/>
            <person name="Waldron L."/>
            <person name="Wall M."/>
            <person name="Wang Q."/>
            <person name="Warren J."/>
            <person name="Warry G.L."/>
            <person name="Wei X."/>
            <person name="West A."/>
            <person name="Whitehead S.L."/>
            <person name="Whiteley M.N."/>
            <person name="Wilkinson J.E."/>
            <person name="Willey D.L."/>
            <person name="Williams G."/>
            <person name="Williams L."/>
            <person name="Williamson A."/>
            <person name="Williamson H."/>
            <person name="Wilming L."/>
            <person name="Woodmansey R.L."/>
            <person name="Wray P.W."/>
            <person name="Yen J."/>
            <person name="Zhang J."/>
            <person name="Zhou J."/>
            <person name="Zoghbi H."/>
            <person name="Zorilla S."/>
            <person name="Buck D."/>
            <person name="Reinhardt R."/>
            <person name="Poustka A."/>
            <person name="Rosenthal A."/>
            <person name="Lehrach H."/>
            <person name="Meindl A."/>
            <person name="Minx P.J."/>
            <person name="Hillier L.W."/>
            <person name="Willard H.F."/>
            <person name="Wilson R.K."/>
            <person name="Waterston R.H."/>
            <person name="Rice C.M."/>
            <person name="Vaudin M."/>
            <person name="Coulson A."/>
            <person name="Nelson D.L."/>
            <person name="Weinstock G."/>
            <person name="Sulston J.E."/>
            <person name="Durbin R.M."/>
            <person name="Hubbard T."/>
            <person name="Gibbs R.A."/>
            <person name="Beck S."/>
            <person name="Rogers J."/>
            <person name="Bentley D.R."/>
        </authorList>
    </citation>
    <scope>NUCLEOTIDE SEQUENCE [LARGE SCALE GENOMIC DNA]</scope>
</reference>
<reference key="3">
    <citation type="submission" date="2005-09" db="EMBL/GenBank/DDBJ databases">
        <authorList>
            <person name="Mural R.J."/>
            <person name="Istrail S."/>
            <person name="Sutton G.G."/>
            <person name="Florea L."/>
            <person name="Halpern A.L."/>
            <person name="Mobarry C.M."/>
            <person name="Lippert R."/>
            <person name="Walenz B."/>
            <person name="Shatkay H."/>
            <person name="Dew I."/>
            <person name="Miller J.R."/>
            <person name="Flanigan M.J."/>
            <person name="Edwards N.J."/>
            <person name="Bolanos R."/>
            <person name="Fasulo D."/>
            <person name="Halldorsson B.V."/>
            <person name="Hannenhalli S."/>
            <person name="Turner R."/>
            <person name="Yooseph S."/>
            <person name="Lu F."/>
            <person name="Nusskern D.R."/>
            <person name="Shue B.C."/>
            <person name="Zheng X.H."/>
            <person name="Zhong F."/>
            <person name="Delcher A.L."/>
            <person name="Huson D.H."/>
            <person name="Kravitz S.A."/>
            <person name="Mouchard L."/>
            <person name="Reinert K."/>
            <person name="Remington K.A."/>
            <person name="Clark A.G."/>
            <person name="Waterman M.S."/>
            <person name="Eichler E.E."/>
            <person name="Adams M.D."/>
            <person name="Hunkapiller M.W."/>
            <person name="Myers E.W."/>
            <person name="Venter J.C."/>
        </authorList>
    </citation>
    <scope>NUCLEOTIDE SEQUENCE [LARGE SCALE GENOMIC DNA]</scope>
</reference>
<reference key="4">
    <citation type="journal article" date="2004" name="Genome Res.">
        <title>The status, quality, and expansion of the NIH full-length cDNA project: the Mammalian Gene Collection (MGC).</title>
        <authorList>
            <consortium name="The MGC Project Team"/>
        </authorList>
    </citation>
    <scope>NUCLEOTIDE SEQUENCE [LARGE SCALE MRNA]</scope>
    <source>
        <tissue>Brain</tissue>
    </source>
</reference>
<reference key="5">
    <citation type="journal article" date="1998" name="EMBO J.">
        <title>A novel capacitative calcium entry channel expressed in excitable cells.</title>
        <authorList>
            <person name="Philipp S."/>
            <person name="Hambrecht J."/>
            <person name="Braslavski L."/>
            <person name="Schroth G."/>
            <person name="Freichel M."/>
            <person name="Murakami M."/>
            <person name="Cavalie A."/>
            <person name="Flockerzi V."/>
        </authorList>
    </citation>
    <scope>TISSUE SPECIFICITY</scope>
</reference>
<reference key="6">
    <citation type="journal article" date="2002" name="Proc. Natl. Acad. Sci. U.S.A.">
        <title>Subunit composition of mammalian transient receptor potential channels in living cells.</title>
        <authorList>
            <person name="Hofmann T."/>
            <person name="Schaefer M."/>
            <person name="Schultz G."/>
            <person name="Gudermann T."/>
        </authorList>
    </citation>
    <scope>SUBUNIT</scope>
</reference>
<reference key="7">
    <citation type="journal article" date="2005" name="J. Biol. Chem.">
        <title>MxA, a member of the dynamin superfamily, interacts with the ankyrin-like repeat domain of TRPC.</title>
        <authorList>
            <person name="Lussier M.P."/>
            <person name="Cayouette S."/>
            <person name="Lepage P.K."/>
            <person name="Bernier C.L."/>
            <person name="Francoeur N."/>
            <person name="St-Hilaire M."/>
            <person name="Pinard M."/>
            <person name="Boulay G."/>
        </authorList>
    </citation>
    <scope>INTERACTION WITH MX1</scope>
</reference>
<reference key="8">
    <citation type="journal article" date="2005" name="Pflugers Arch.">
        <title>Inhibition of TRPC5 channels by Ca2+-binding protein 1 in Xenopus oocytes.</title>
        <authorList>
            <person name="Kinoshita-Kawada M."/>
            <person name="Tang J."/>
            <person name="Xiao R."/>
            <person name="Kaneko S."/>
            <person name="Foskett J.K."/>
            <person name="Zhu M.X."/>
        </authorList>
    </citation>
    <scope>INTERACTION WITH CABP1</scope>
</reference>
<reference key="9">
    <citation type="journal article" date="2006" name="J. Cell. Physiol.">
        <title>Functional characterization of PKDREJ, a male germ cell-restricted polycystin.</title>
        <authorList>
            <person name="Sutton K.A."/>
            <person name="Jungnickel M.K."/>
            <person name="Ward C.J."/>
            <person name="Harris P.C."/>
            <person name="Florman H.M."/>
        </authorList>
    </citation>
    <scope>INTERACTION WITH PKD2L2</scope>
</reference>
<reference key="10">
    <citation type="journal article" date="2006" name="J. Physiol. (Lond.)">
        <title>Ca2+-calmodulin-dependent myosin light chain kinase is essential for activation of TRPC5 channels expressed in HEK293 cells.</title>
        <authorList>
            <person name="Shimizu S."/>
            <person name="Yoshida T."/>
            <person name="Wakamori M."/>
            <person name="Ishii M."/>
            <person name="Okada T."/>
            <person name="Takahashi M."/>
            <person name="Seto M."/>
            <person name="Sakurada K."/>
            <person name="Kiuchi Y."/>
            <person name="Mori Y."/>
        </authorList>
    </citation>
    <scope>FUNCTION AS CALCIUM CHANNEL</scope>
    <scope>ACTIVITY REGULATION</scope>
    <scope>SUBCELLULAR LOCATION</scope>
    <scope>TRANSPORTER ACTIVITY</scope>
</reference>
<reference key="11">
    <citation type="journal article" date="2008" name="Cell Calcium">
        <title>RNF24, a new TRPC interacting protein, causes the intracellular retention of TRPC.</title>
        <authorList>
            <person name="Lussier M.P."/>
            <person name="Lepage P.K."/>
            <person name="Bousquet S.M."/>
            <person name="Boulay G."/>
        </authorList>
    </citation>
    <scope>INTERACTION WITH RNF24</scope>
</reference>
<reference key="12">
    <citation type="journal article" date="2010" name="J. Biol. Chem.">
        <title>The phospholipid-binding protein SESTD1 is a novel regulator of the transient receptor potential channels TRPC4 and TRPC5.</title>
        <authorList>
            <person name="Miehe S."/>
            <person name="Bieberstein A."/>
            <person name="Arnould I."/>
            <person name="Ihdene O."/>
            <person name="Rutten H."/>
            <person name="Strubing C."/>
        </authorList>
    </citation>
    <scope>INTERACTION WITH SESTD1</scope>
</reference>
<reference key="13">
    <citation type="journal article" date="2020" name="Cells">
        <title>Transient Receptor Potential Canonical 5-Scramblase Signaling Complex Mediates Neuronal Phosphatidylserine Externalization and Apoptosis.</title>
        <authorList>
            <person name="Guo J."/>
            <person name="Li J."/>
            <person name="Xia L."/>
            <person name="Wang Y."/>
            <person name="Zhu J."/>
            <person name="Du J."/>
            <person name="Lu Y."/>
            <person name="Liu G."/>
            <person name="Yao X."/>
            <person name="Shen B."/>
        </authorList>
    </citation>
    <scope>INTERACTION WITH PLSCR1</scope>
</reference>
<reference key="14">
    <citation type="journal article" date="2012" name="N. Engl. J. Med.">
        <title>Diagnostic exome sequencing in persons with severe intellectual disability.</title>
        <authorList>
            <person name="de Ligt J."/>
            <person name="Willemsen M.H."/>
            <person name="van Bon B.W."/>
            <person name="Kleefstra T."/>
            <person name="Yntema H.G."/>
            <person name="Kroes T."/>
            <person name="Vulto-van Silfhout A.T."/>
            <person name="Koolen D.A."/>
            <person name="de Vries P."/>
            <person name="Gilissen C."/>
            <person name="del Rosario M."/>
            <person name="Hoischen A."/>
            <person name="Scheffer H."/>
            <person name="de Vries B.B."/>
            <person name="Brunner H.G."/>
            <person name="Veltman J.A."/>
            <person name="Vissers L.E."/>
        </authorList>
    </citation>
    <scope>VARIANT THR-667</scope>
</reference>
<reference key="15">
    <citation type="journal article" date="2024" name="Cell">
        <title>Loss of transient receptor potential channel 5 causes obesity and postpartum depression.</title>
        <authorList>
            <person name="Li Y."/>
            <person name="Cacciottolo T.M."/>
            <person name="Yin N."/>
            <person name="He Y."/>
            <person name="Liu H."/>
            <person name="Liu H."/>
            <person name="Yang Y."/>
            <person name="Henning E."/>
            <person name="Keogh J.M."/>
            <person name="Lawler K."/>
            <person name="Mendes de Oliveira E."/>
            <person name="Gardner E.J."/>
            <person name="Kentistou K.A."/>
            <person name="Laouris P."/>
            <person name="Bounds R."/>
            <person name="Ong K.K."/>
            <person name="Perry J.R.B."/>
            <person name="Barroso I."/>
            <person name="Tu L."/>
            <person name="Bean J.C."/>
            <person name="Yu M."/>
            <person name="Conde K.M."/>
            <person name="Wang M."/>
            <person name="Ginnard O."/>
            <person name="Fang X."/>
            <person name="Tong L."/>
            <person name="Han J."/>
            <person name="Darwich T."/>
            <person name="Williams K.W."/>
            <person name="Yang Y."/>
            <person name="Wang C."/>
            <person name="Joss S."/>
            <person name="Firth H.V."/>
            <person name="Xu Y."/>
            <person name="Farooqi I.S."/>
        </authorList>
    </citation>
    <scope>VARIANTS LYS-34 DEL; MET-134; HIS-672; ILE-738; GLU-870; PHE-884 AND THR-893</scope>
    <scope>CHARACTERIZATION OF VARIANTS LYS-34 DEL; MET-134; HIS-672; ILE-738; GLU-870; PHE-884 AND THR-893</scope>
    <scope>FUNCTION</scope>
    <scope>TRANSPORTER ACTIVITY</scope>
    <scope>SUBCELLULAR LOCATION</scope>
</reference>
<reference evidence="21 22 23 24" key="16">
    <citation type="journal article" date="2023" name="Nat. Commun.">
        <title>Molecular architecture of the Galphai-bound TRPC5 ion channel.</title>
        <authorList>
            <person name="Won J."/>
            <person name="Kim J."/>
            <person name="Jeong H."/>
            <person name="Kim J."/>
            <person name="Feng S."/>
            <person name="Jeong B."/>
            <person name="Kwak M."/>
            <person name="Ko J."/>
            <person name="Im W."/>
            <person name="So I."/>
            <person name="Lee H.H."/>
        </authorList>
    </citation>
    <scope>STRUCTURE BY ELECTRON MICROSCOPY (3.15 ANGSTROMS) OF 1-765 IN COMPLEXES WITH CALCIUM; ZINC; PHOSPHOLIPID; GTP AND GNAI3</scope>
    <scope>FUNCTION</scope>
    <scope>TRANSPORTER ACTIVITY</scope>
    <scope>ACTIVITY REGULATION</scope>
    <scope>SUBUNIT</scope>
    <scope>SUBCELLULAR LOCATION</scope>
    <scope>TOPOLOGY</scope>
    <scope>ANK REPEATS</scope>
    <scope>DISULFIDE BONDS</scope>
</reference>
<keyword id="KW-0002">3D-structure</keyword>
<keyword id="KW-0040">ANK repeat</keyword>
<keyword id="KW-0106">Calcium</keyword>
<keyword id="KW-0107">Calcium channel</keyword>
<keyword id="KW-0109">Calcium transport</keyword>
<keyword id="KW-1003">Cell membrane</keyword>
<keyword id="KW-0225">Disease variant</keyword>
<keyword id="KW-1015">Disulfide bond</keyword>
<keyword id="KW-0325">Glycoprotein</keyword>
<keyword id="KW-0407">Ion channel</keyword>
<keyword id="KW-0406">Ion transport</keyword>
<keyword id="KW-0472">Membrane</keyword>
<keyword id="KW-0479">Metal-binding</keyword>
<keyword id="KW-1267">Proteomics identification</keyword>
<keyword id="KW-1185">Reference proteome</keyword>
<keyword id="KW-0677">Repeat</keyword>
<keyword id="KW-0812">Transmembrane</keyword>
<keyword id="KW-1133">Transmembrane helix</keyword>
<keyword id="KW-0813">Transport</keyword>
<keyword id="KW-0862">Zinc</keyword>
<feature type="chain" id="PRO_0000215318" description="Short transient receptor potential channel 5">
    <location>
        <begin position="1"/>
        <end position="973"/>
    </location>
</feature>
<feature type="topological domain" description="Cytoplasmic" evidence="13 21 22 23 24">
    <location>
        <begin position="1"/>
        <end position="325"/>
    </location>
</feature>
<feature type="intramembrane region" description="Discontinuously helical; Name=Pre-S1" evidence="13 21 22 23 24">
    <location>
        <begin position="326"/>
        <end position="360"/>
    </location>
</feature>
<feature type="topological domain" description="Cytoplasmic" evidence="13 21 22 23 24">
    <location>
        <begin position="361"/>
        <end position="363"/>
    </location>
</feature>
<feature type="transmembrane region" description="Helical; Name=S1" evidence="13 21 22 23 24">
    <location>
        <begin position="364"/>
        <end position="384"/>
    </location>
</feature>
<feature type="topological domain" description="Extracellular" evidence="13 21 22 23 24">
    <location>
        <begin position="385"/>
        <end position="404"/>
    </location>
</feature>
<feature type="transmembrane region" description="Helical; Name=S2" evidence="13 21 22 23 24">
    <location>
        <begin position="405"/>
        <end position="419"/>
    </location>
</feature>
<feature type="topological domain" description="Cytoplasmic" evidence="13 21 22 23 24">
    <location>
        <begin position="420"/>
        <end position="433"/>
    </location>
</feature>
<feature type="transmembrane region" description="Helical; Name=S3" evidence="13 21 22 23 24">
    <location>
        <begin position="434"/>
        <end position="454"/>
    </location>
</feature>
<feature type="topological domain" description="Extracellular" evidence="13 21 22 23 24">
    <location>
        <begin position="455"/>
        <end position="476"/>
    </location>
</feature>
<feature type="transmembrane region" description="Helical; Name=S4" evidence="13 21 22 23 24">
    <location>
        <begin position="477"/>
        <end position="497"/>
    </location>
</feature>
<feature type="topological domain" description="Cytoplasmic" evidence="13 21 22 23 24">
    <location>
        <begin position="498"/>
        <end position="512"/>
    </location>
</feature>
<feature type="transmembrane region" description="Helical; Name=S5" evidence="13 21 22 23 24">
    <location>
        <begin position="513"/>
        <end position="535"/>
    </location>
</feature>
<feature type="topological domain" description="Extracellular" evidence="13 21 22 23 24">
    <location>
        <begin position="536"/>
        <end position="603"/>
    </location>
</feature>
<feature type="transmembrane region" description="Helical; Name=S6" evidence="13 21 22 23 24">
    <location>
        <begin position="604"/>
        <end position="624"/>
    </location>
</feature>
<feature type="topological domain" description="Cytoplasmic" evidence="13 21 22 23 24">
    <location>
        <begin position="625"/>
        <end position="973"/>
    </location>
</feature>
<feature type="repeat" description="ANK 1" evidence="13 21 22 23 24">
    <location>
        <begin position="30"/>
        <end position="60"/>
    </location>
</feature>
<feature type="repeat" description="ANK 2" evidence="13 21 22 23 24">
    <location>
        <begin position="69"/>
        <end position="97"/>
    </location>
</feature>
<feature type="repeat" description="ANK 3" evidence="13 21 22 23 24">
    <location>
        <begin position="98"/>
        <end position="124"/>
    </location>
</feature>
<feature type="repeat" description="ANK 4" evidence="13 21 22 23 24">
    <location>
        <begin position="141"/>
        <end position="170"/>
    </location>
</feature>
<feature type="region of interest" description="Disordered" evidence="3">
    <location>
        <begin position="766"/>
        <end position="794"/>
    </location>
</feature>
<feature type="region of interest" description="Disordered" evidence="3">
    <location>
        <begin position="810"/>
        <end position="837"/>
    </location>
</feature>
<feature type="region of interest" description="Essential for binding to NHERF1 PDZ domain" evidence="1">
    <location>
        <begin position="971"/>
        <end position="973"/>
    </location>
</feature>
<feature type="binding site" evidence="13 21 22 23 24">
    <location>
        <position position="172"/>
    </location>
    <ligand>
        <name>Zn(2+)</name>
        <dbReference type="ChEBI" id="CHEBI:29105"/>
    </ligand>
</feature>
<feature type="binding site" evidence="13 21 22 23 24">
    <location>
        <position position="176"/>
    </location>
    <ligand>
        <name>Zn(2+)</name>
        <dbReference type="ChEBI" id="CHEBI:29105"/>
    </ligand>
</feature>
<feature type="binding site" evidence="13 21 22 23 24">
    <location>
        <position position="178"/>
    </location>
    <ligand>
        <name>Zn(2+)</name>
        <dbReference type="ChEBI" id="CHEBI:29105"/>
    </ligand>
</feature>
<feature type="binding site" evidence="13 21 22 23 24">
    <location>
        <position position="181"/>
    </location>
    <ligand>
        <name>Zn(2+)</name>
        <dbReference type="ChEBI" id="CHEBI:29105"/>
    </ligand>
</feature>
<feature type="binding site" evidence="13 21 22 23 24">
    <location>
        <position position="418"/>
    </location>
    <ligand>
        <name>Ca(2+)</name>
        <dbReference type="ChEBI" id="CHEBI:29108"/>
    </ligand>
</feature>
<feature type="binding site" evidence="13 22 23 24">
    <location>
        <position position="421"/>
    </location>
    <ligand>
        <name>Ca(2+)</name>
        <dbReference type="ChEBI" id="CHEBI:29108"/>
    </ligand>
</feature>
<feature type="binding site" evidence="13 21 22 23 24">
    <location>
        <position position="436"/>
    </location>
    <ligand>
        <name>Ca(2+)</name>
        <dbReference type="ChEBI" id="CHEBI:29108"/>
    </ligand>
</feature>
<feature type="binding site" evidence="13 21 22 23 24">
    <location>
        <position position="439"/>
    </location>
    <ligand>
        <name>Ca(2+)</name>
        <dbReference type="ChEBI" id="CHEBI:29108"/>
    </ligand>
</feature>
<feature type="glycosylation site" description="N-linked (GlcNAc...) asparagine" evidence="2">
    <location>
        <position position="461"/>
    </location>
</feature>
<feature type="disulfide bond" evidence="17 18 19 20 21 22 23 24">
    <location>
        <begin position="553"/>
        <end position="558"/>
    </location>
</feature>
<feature type="sequence variant" id="VAR_089874" description="Found in a patient with mental disorder and obesity; likely pathogenic; the mutation in a knockin mouse model recapitulates the human phenotype; decreases protein level; decreases cell membrane localization; strongly reduces channel activity." evidence="14">
    <location>
        <position position="34"/>
    </location>
</feature>
<feature type="sequence variant" id="VAR_089875" description="Found in a patient with mental disorder and obesity; uncertain significance; no effect on protein levels; does not affect cell membrane localization; strongly reduces channel activity; dbSNP:rs778578106." evidence="14">
    <original>T</original>
    <variation>M</variation>
    <location>
        <position position="134"/>
    </location>
</feature>
<feature type="sequence variant" id="VAR_069415" description="Found in a patient with severe delayed speech, autism spectrum and Gilles de la Tourette disorders." evidence="11">
    <original>P</original>
    <variation>T</variation>
    <location>
        <position position="667"/>
    </location>
</feature>
<feature type="sequence variant" id="VAR_089876" description="Found in a patient with mental disorder and obesity; uncertain significance; no effect on protein levels; does not affect cell membrane localization; strongly reduces channel activity; dbSNP:rs759412912." evidence="14">
    <original>Y</original>
    <variation>H</variation>
    <location>
        <position position="672"/>
    </location>
</feature>
<feature type="sequence variant" id="VAR_052369" description="In dbSNP:rs36047478.">
    <original>R</original>
    <variation>H</variation>
    <location>
        <position position="702"/>
    </location>
</feature>
<feature type="sequence variant" id="VAR_089877" description="Found in a patient with mental disorder and obesity; uncertain significance; no effect on protein levels; does not affect cell membrane localization; strongly reduces channel activity; dbSNP:rs145407228." evidence="14">
    <original>L</original>
    <variation>I</variation>
    <location>
        <position position="738"/>
    </location>
</feature>
<feature type="sequence variant" id="VAR_089878" description="Found in a patient with mental disorder and obesity; uncertain significance; no effect on protein levels; does not affect cell membrane localization; strongly reduces channel activity; dbSNP:rs745391902." evidence="14">
    <original>G</original>
    <variation>E</variation>
    <location>
        <position position="870"/>
    </location>
</feature>
<feature type="sequence variant" id="VAR_089879" description="Found in a patient with mental disorder and obesity; uncertain significance; decreases protein levels; does not affect cell membrane localization; strongly reduces channel activity; dbSNP:rs370637682." evidence="14">
    <original>S</original>
    <variation>F</variation>
    <location>
        <position position="884"/>
    </location>
</feature>
<feature type="sequence variant" id="VAR_089880" description="Found in a patient with mental disorder and obesity; uncertain significance; no effect on protein levels; does not affect cell membrane localization; strongly reduces channel activity; dbSNP:rs367779214." evidence="14">
    <original>A</original>
    <variation>T</variation>
    <location>
        <position position="893"/>
    </location>
</feature>
<feature type="strand" evidence="28">
    <location>
        <begin position="18"/>
        <end position="20"/>
    </location>
</feature>
<feature type="helix" evidence="28">
    <location>
        <begin position="31"/>
        <end position="42"/>
    </location>
</feature>
<feature type="helix" evidence="28">
    <location>
        <begin position="45"/>
        <end position="58"/>
    </location>
</feature>
<feature type="helix" evidence="28">
    <location>
        <begin position="73"/>
        <end position="79"/>
    </location>
</feature>
<feature type="helix" evidence="28">
    <location>
        <begin position="83"/>
        <end position="91"/>
    </location>
</feature>
<feature type="helix" evidence="28">
    <location>
        <begin position="99"/>
        <end position="106"/>
    </location>
</feature>
<feature type="helix" evidence="28">
    <location>
        <begin position="109"/>
        <end position="116"/>
    </location>
</feature>
<feature type="helix" evidence="28">
    <location>
        <begin position="145"/>
        <end position="152"/>
    </location>
</feature>
<feature type="helix" evidence="28">
    <location>
        <begin position="155"/>
        <end position="162"/>
    </location>
</feature>
<feature type="strand" evidence="28">
    <location>
        <begin position="166"/>
        <end position="168"/>
    </location>
</feature>
<feature type="helix" evidence="28">
    <location>
        <begin position="179"/>
        <end position="187"/>
    </location>
</feature>
<feature type="helix" evidence="28">
    <location>
        <begin position="189"/>
        <end position="203"/>
    </location>
</feature>
<feature type="helix" evidence="28">
    <location>
        <begin position="206"/>
        <end position="210"/>
    </location>
</feature>
<feature type="helix" evidence="28">
    <location>
        <begin position="216"/>
        <end position="233"/>
    </location>
</feature>
<feature type="strand" evidence="25">
    <location>
        <begin position="234"/>
        <end position="237"/>
    </location>
</feature>
<feature type="helix" evidence="28">
    <location>
        <begin position="238"/>
        <end position="257"/>
    </location>
</feature>
<feature type="helix" evidence="28">
    <location>
        <begin position="262"/>
        <end position="269"/>
    </location>
</feature>
<feature type="helix" evidence="28">
    <location>
        <begin position="288"/>
        <end position="295"/>
    </location>
</feature>
<feature type="helix" evidence="28">
    <location>
        <begin position="299"/>
        <end position="302"/>
    </location>
</feature>
<feature type="helix" evidence="28">
    <location>
        <begin position="305"/>
        <end position="315"/>
    </location>
</feature>
<feature type="strand" evidence="27">
    <location>
        <begin position="316"/>
        <end position="318"/>
    </location>
</feature>
<feature type="turn" evidence="25">
    <location>
        <begin position="320"/>
        <end position="323"/>
    </location>
</feature>
<feature type="helix" evidence="28">
    <location>
        <begin position="327"/>
        <end position="339"/>
    </location>
</feature>
<feature type="helix" evidence="28">
    <location>
        <begin position="341"/>
        <end position="350"/>
    </location>
</feature>
<feature type="strand" evidence="28">
    <location>
        <begin position="352"/>
        <end position="354"/>
    </location>
</feature>
<feature type="turn" evidence="28">
    <location>
        <begin position="355"/>
        <end position="357"/>
    </location>
</feature>
<feature type="strand" evidence="26">
    <location>
        <begin position="360"/>
        <end position="362"/>
    </location>
</feature>
<feature type="helix" evidence="28">
    <location>
        <begin position="363"/>
        <end position="383"/>
    </location>
</feature>
<feature type="turn" evidence="29">
    <location>
        <begin position="387"/>
        <end position="389"/>
    </location>
</feature>
<feature type="strand" evidence="29">
    <location>
        <begin position="395"/>
        <end position="397"/>
    </location>
</feature>
<feature type="helix" evidence="28">
    <location>
        <begin position="402"/>
        <end position="425"/>
    </location>
</feature>
<feature type="helix" evidence="28">
    <location>
        <begin position="428"/>
        <end position="431"/>
    </location>
</feature>
<feature type="helix" evidence="28">
    <location>
        <begin position="435"/>
        <end position="459"/>
    </location>
</feature>
<feature type="helix" evidence="28">
    <location>
        <begin position="466"/>
        <end position="468"/>
    </location>
</feature>
<feature type="helix" evidence="28">
    <location>
        <begin position="474"/>
        <end position="491"/>
    </location>
</feature>
<feature type="helix" evidence="28">
    <location>
        <begin position="492"/>
        <end position="499"/>
    </location>
</feature>
<feature type="turn" evidence="28">
    <location>
        <begin position="501"/>
        <end position="503"/>
    </location>
</feature>
<feature type="helix" evidence="28">
    <location>
        <begin position="504"/>
        <end position="539"/>
    </location>
</feature>
<feature type="helix" evidence="28">
    <location>
        <begin position="540"/>
        <end position="542"/>
    </location>
</feature>
<feature type="helix" evidence="28">
    <location>
        <begin position="546"/>
        <end position="548"/>
    </location>
</feature>
<feature type="helix" evidence="25">
    <location>
        <begin position="550"/>
        <end position="552"/>
    </location>
</feature>
<feature type="strand" evidence="28">
    <location>
        <begin position="558"/>
        <end position="560"/>
    </location>
</feature>
<feature type="strand" evidence="25">
    <location>
        <begin position="564"/>
        <end position="567"/>
    </location>
</feature>
<feature type="helix" evidence="28">
    <location>
        <begin position="568"/>
        <end position="579"/>
    </location>
</feature>
<feature type="helix" evidence="28">
    <location>
        <begin position="585"/>
        <end position="588"/>
    </location>
</feature>
<feature type="helix" evidence="28">
    <location>
        <begin position="595"/>
        <end position="614"/>
    </location>
</feature>
<feature type="helix" evidence="28">
    <location>
        <begin position="616"/>
        <end position="632"/>
    </location>
</feature>
<feature type="helix" evidence="28">
    <location>
        <begin position="635"/>
        <end position="649"/>
    </location>
</feature>
<feature type="strand" evidence="28">
    <location>
        <begin position="651"/>
        <end position="653"/>
    </location>
</feature>
<feature type="turn" evidence="28">
    <location>
        <begin position="659"/>
        <end position="662"/>
    </location>
</feature>
<feature type="helix" evidence="28">
    <location>
        <begin position="707"/>
        <end position="733"/>
    </location>
</feature>
<feature type="helix" evidence="28">
    <location>
        <begin position="740"/>
        <end position="760"/>
    </location>
</feature>
<protein>
    <recommendedName>
        <fullName>Short transient receptor potential channel 5</fullName>
        <shortName>TrpC5</shortName>
    </recommendedName>
    <alternativeName>
        <fullName>Transient receptor protein 5</fullName>
        <shortName>TRP-5</shortName>
        <shortName>hTRP-5</shortName>
        <shortName>hTRP5</shortName>
    </alternativeName>
</protein>
<gene>
    <name type="primary">TRPC5</name>
    <name type="synonym">TRP5</name>
</gene>
<accession>Q9UL62</accession>
<accession>B2RP53</accession>
<accession>O75233</accession>
<accession>Q5JXY8</accession>
<accession>Q9Y514</accession>
<proteinExistence type="evidence at protein level"/>